<dbReference type="EMBL" id="AE003852">
    <property type="protein sequence ID" value="AAF93393.1"/>
    <property type="molecule type" value="Genomic_DNA"/>
</dbReference>
<dbReference type="PIR" id="C82351">
    <property type="entry name" value="C82351"/>
</dbReference>
<dbReference type="RefSeq" id="NP_229874.1">
    <property type="nucleotide sequence ID" value="NC_002505.1"/>
</dbReference>
<dbReference type="SMR" id="Q9KVC9"/>
<dbReference type="STRING" id="243277.VC_0217"/>
<dbReference type="DNASU" id="2614562"/>
<dbReference type="EnsemblBacteria" id="AAF93393">
    <property type="protein sequence ID" value="AAF93393"/>
    <property type="gene ID" value="VC_0217"/>
</dbReference>
<dbReference type="KEGG" id="vch:VC_0217"/>
<dbReference type="PATRIC" id="fig|243277.26.peg.199"/>
<dbReference type="eggNOG" id="COG2003">
    <property type="taxonomic scope" value="Bacteria"/>
</dbReference>
<dbReference type="HOGENOM" id="CLU_073529_0_2_6"/>
<dbReference type="Proteomes" id="UP000000584">
    <property type="component" value="Chromosome 1"/>
</dbReference>
<dbReference type="GO" id="GO:0046872">
    <property type="term" value="F:metal ion binding"/>
    <property type="evidence" value="ECO:0007669"/>
    <property type="project" value="UniProtKB-KW"/>
</dbReference>
<dbReference type="GO" id="GO:0008237">
    <property type="term" value="F:metallopeptidase activity"/>
    <property type="evidence" value="ECO:0007669"/>
    <property type="project" value="UniProtKB-KW"/>
</dbReference>
<dbReference type="GO" id="GO:0006508">
    <property type="term" value="P:proteolysis"/>
    <property type="evidence" value="ECO:0007669"/>
    <property type="project" value="UniProtKB-KW"/>
</dbReference>
<dbReference type="CDD" id="cd08071">
    <property type="entry name" value="MPN_DUF2466"/>
    <property type="match status" value="1"/>
</dbReference>
<dbReference type="FunFam" id="3.40.140.10:FF:000032">
    <property type="entry name" value="DNA repair protein RadC"/>
    <property type="match status" value="1"/>
</dbReference>
<dbReference type="Gene3D" id="1.10.150.20">
    <property type="entry name" value="5' to 3' exonuclease, C-terminal subdomain"/>
    <property type="match status" value="1"/>
</dbReference>
<dbReference type="Gene3D" id="3.40.140.10">
    <property type="entry name" value="Cytidine Deaminase, domain 2"/>
    <property type="match status" value="1"/>
</dbReference>
<dbReference type="InterPro" id="IPR037518">
    <property type="entry name" value="MPN"/>
</dbReference>
<dbReference type="InterPro" id="IPR025657">
    <property type="entry name" value="RadC_JAB"/>
</dbReference>
<dbReference type="InterPro" id="IPR010994">
    <property type="entry name" value="RuvA_2-like"/>
</dbReference>
<dbReference type="InterPro" id="IPR001405">
    <property type="entry name" value="UPF0758"/>
</dbReference>
<dbReference type="InterPro" id="IPR020891">
    <property type="entry name" value="UPF0758_CS"/>
</dbReference>
<dbReference type="InterPro" id="IPR046778">
    <property type="entry name" value="UPF0758_N"/>
</dbReference>
<dbReference type="NCBIfam" id="NF000642">
    <property type="entry name" value="PRK00024.1"/>
    <property type="match status" value="1"/>
</dbReference>
<dbReference type="NCBIfam" id="TIGR00608">
    <property type="entry name" value="radc"/>
    <property type="match status" value="1"/>
</dbReference>
<dbReference type="PANTHER" id="PTHR30471">
    <property type="entry name" value="DNA REPAIR PROTEIN RADC"/>
    <property type="match status" value="1"/>
</dbReference>
<dbReference type="PANTHER" id="PTHR30471:SF3">
    <property type="entry name" value="UPF0758 PROTEIN YEES-RELATED"/>
    <property type="match status" value="1"/>
</dbReference>
<dbReference type="Pfam" id="PF04002">
    <property type="entry name" value="RadC"/>
    <property type="match status" value="1"/>
</dbReference>
<dbReference type="Pfam" id="PF20582">
    <property type="entry name" value="UPF0758_N"/>
    <property type="match status" value="1"/>
</dbReference>
<dbReference type="SUPFAM" id="SSF102712">
    <property type="entry name" value="JAB1/MPN domain"/>
    <property type="match status" value="1"/>
</dbReference>
<dbReference type="SUPFAM" id="SSF47781">
    <property type="entry name" value="RuvA domain 2-like"/>
    <property type="match status" value="1"/>
</dbReference>
<dbReference type="PROSITE" id="PS50249">
    <property type="entry name" value="MPN"/>
    <property type="match status" value="1"/>
</dbReference>
<dbReference type="PROSITE" id="PS01302">
    <property type="entry name" value="UPF0758"/>
    <property type="match status" value="1"/>
</dbReference>
<feature type="chain" id="PRO_0000190749" description="UPF0758 protein VC_0217">
    <location>
        <begin position="1"/>
        <end position="224"/>
    </location>
</feature>
<feature type="domain" description="MPN" evidence="1">
    <location>
        <begin position="102"/>
        <end position="224"/>
    </location>
</feature>
<feature type="region of interest" description="Disordered" evidence="2">
    <location>
        <begin position="1"/>
        <end position="20"/>
    </location>
</feature>
<feature type="short sequence motif" description="JAMM motif" evidence="1">
    <location>
        <begin position="173"/>
        <end position="186"/>
    </location>
</feature>
<feature type="binding site" evidence="1">
    <location>
        <position position="173"/>
    </location>
    <ligand>
        <name>Zn(2+)</name>
        <dbReference type="ChEBI" id="CHEBI:29105"/>
        <note>catalytic</note>
    </ligand>
</feature>
<feature type="binding site" evidence="1">
    <location>
        <position position="175"/>
    </location>
    <ligand>
        <name>Zn(2+)</name>
        <dbReference type="ChEBI" id="CHEBI:29105"/>
        <note>catalytic</note>
    </ligand>
</feature>
<feature type="binding site" evidence="1">
    <location>
        <position position="186"/>
    </location>
    <ligand>
        <name>Zn(2+)</name>
        <dbReference type="ChEBI" id="CHEBI:29105"/>
        <note>catalytic</note>
    </ligand>
</feature>
<sequence length="224" mass="25246">MSLKQLPTESMPREKLLQRGPQSLSDAELLAIFLRTGTQGMNVLALADLLLRDFGSLRALFCASKEQFCRHKGLGEAKFVQLQAVLEMTQRYLAETLKRGDALTSPQQTKLYLSSVLRDRQREAFYILFLDNQHRVIRDEILFEGTIDAASVYPREVVKRALHHNAAAVILAHNHPSGVAEPSQADRRITDRLRDALGLVEIRVLDHFVVGDGEVVSFAERGWI</sequence>
<proteinExistence type="inferred from homology"/>
<name>Y217_VIBCH</name>
<evidence type="ECO:0000255" key="1">
    <source>
        <dbReference type="PROSITE-ProRule" id="PRU01182"/>
    </source>
</evidence>
<evidence type="ECO:0000256" key="2">
    <source>
        <dbReference type="SAM" id="MobiDB-lite"/>
    </source>
</evidence>
<evidence type="ECO:0000305" key="3"/>
<gene>
    <name type="ordered locus">VC_0217</name>
</gene>
<accession>Q9KVC9</accession>
<comment type="similarity">
    <text evidence="3">Belongs to the UPF0758 family.</text>
</comment>
<protein>
    <recommendedName>
        <fullName>UPF0758 protein VC_0217</fullName>
    </recommendedName>
</protein>
<reference key="1">
    <citation type="journal article" date="2000" name="Nature">
        <title>DNA sequence of both chromosomes of the cholera pathogen Vibrio cholerae.</title>
        <authorList>
            <person name="Heidelberg J.F."/>
            <person name="Eisen J.A."/>
            <person name="Nelson W.C."/>
            <person name="Clayton R.A."/>
            <person name="Gwinn M.L."/>
            <person name="Dodson R.J."/>
            <person name="Haft D.H."/>
            <person name="Hickey E.K."/>
            <person name="Peterson J.D."/>
            <person name="Umayam L.A."/>
            <person name="Gill S.R."/>
            <person name="Nelson K.E."/>
            <person name="Read T.D."/>
            <person name="Tettelin H."/>
            <person name="Richardson D.L."/>
            <person name="Ermolaeva M.D."/>
            <person name="Vamathevan J.J."/>
            <person name="Bass S."/>
            <person name="Qin H."/>
            <person name="Dragoi I."/>
            <person name="Sellers P."/>
            <person name="McDonald L.A."/>
            <person name="Utterback T.R."/>
            <person name="Fleischmann R.D."/>
            <person name="Nierman W.C."/>
            <person name="White O."/>
            <person name="Salzberg S.L."/>
            <person name="Smith H.O."/>
            <person name="Colwell R.R."/>
            <person name="Mekalanos J.J."/>
            <person name="Venter J.C."/>
            <person name="Fraser C.M."/>
        </authorList>
    </citation>
    <scope>NUCLEOTIDE SEQUENCE [LARGE SCALE GENOMIC DNA]</scope>
    <source>
        <strain>ATCC 39315 / El Tor Inaba N16961</strain>
    </source>
</reference>
<organism>
    <name type="scientific">Vibrio cholerae serotype O1 (strain ATCC 39315 / El Tor Inaba N16961)</name>
    <dbReference type="NCBI Taxonomy" id="243277"/>
    <lineage>
        <taxon>Bacteria</taxon>
        <taxon>Pseudomonadati</taxon>
        <taxon>Pseudomonadota</taxon>
        <taxon>Gammaproteobacteria</taxon>
        <taxon>Vibrionales</taxon>
        <taxon>Vibrionaceae</taxon>
        <taxon>Vibrio</taxon>
    </lineage>
</organism>
<keyword id="KW-0378">Hydrolase</keyword>
<keyword id="KW-0479">Metal-binding</keyword>
<keyword id="KW-0482">Metalloprotease</keyword>
<keyword id="KW-0645">Protease</keyword>
<keyword id="KW-1185">Reference proteome</keyword>
<keyword id="KW-0862">Zinc</keyword>